<reference key="1">
    <citation type="journal article" date="2016" name="Nat. Commun.">
        <title>Thousands of microbial genomes shed light on interconnected biogeochemical processes in an aquifer system.</title>
        <authorList>
            <person name="Anantharaman K."/>
            <person name="Brown C.T."/>
            <person name="Hug L.A."/>
            <person name="Sharon I."/>
            <person name="Castelle C.J."/>
            <person name="Probst A.J."/>
            <person name="Thomas B.C."/>
            <person name="Singh A."/>
            <person name="Wilkins M.J."/>
            <person name="Karaoz U."/>
            <person name="Brodie E.L."/>
            <person name="Williams K.H."/>
            <person name="Hubbard S.S."/>
            <person name="Banfield J.F."/>
        </authorList>
    </citation>
    <scope>NUCLEOTIDE SEQUENCE [LARGE SCALE GENOMIC DNA]</scope>
    <source>
        <strain>RIFCSPLOWO2_12_FULL_64_10</strain>
    </source>
</reference>
<reference key="2">
    <citation type="journal article" date="2017" name="Biochem. Biophys. Res. Commun.">
        <title>Identification of UBact, a ubiquitin-like protein, along with other homologous components of a conjugation system and the proteasome in different gram-negative bacteria.</title>
        <authorList>
            <person name="Lehmann G."/>
            <person name="Udasin R.G."/>
            <person name="Livneh I."/>
            <person name="Ciechanover A."/>
        </authorList>
    </citation>
    <scope>PREDICTED FUNCTION</scope>
    <source>
        <strain>RIFCSPLOWO2_12_FULL_64_10</strain>
    </source>
</reference>
<protein>
    <recommendedName>
        <fullName evidence="3">Prokaryotic ubiquitin-like protein UBact</fullName>
    </recommendedName>
</protein>
<accession>A0A1F6CTG8</accession>
<dbReference type="EMBL" id="MFKF01000144">
    <property type="protein sequence ID" value="OGG52311.1"/>
    <property type="molecule type" value="Genomic_DNA"/>
</dbReference>
<dbReference type="SMR" id="A0A1F6CTG8"/>
<dbReference type="Proteomes" id="UP000178606">
    <property type="component" value="Unassembled WGS sequence"/>
</dbReference>
<dbReference type="GO" id="GO:0031386">
    <property type="term" value="F:protein tag activity"/>
    <property type="evidence" value="ECO:0007669"/>
    <property type="project" value="UniProtKB-UniRule"/>
</dbReference>
<dbReference type="HAMAP" id="MF_02133">
    <property type="entry name" value="UBact"/>
    <property type="match status" value="1"/>
</dbReference>
<dbReference type="InterPro" id="IPR037543">
    <property type="entry name" value="UBact"/>
</dbReference>
<dbReference type="NCBIfam" id="NF033388">
    <property type="entry name" value="ubiq_like_UBact"/>
    <property type="match status" value="1"/>
</dbReference>
<dbReference type="Pfam" id="PF20513">
    <property type="entry name" value="UBact"/>
    <property type="match status" value="1"/>
</dbReference>
<comment type="function">
    <text evidence="5">May function as a protein modifier covalently attached to lysine residues of substrate proteins. This may serve to target the modified proteins for degradation by proteasomes.</text>
</comment>
<comment type="similarity">
    <text evidence="1">Belongs to the ubiquitin-like protein UBact family.</text>
</comment>
<feature type="chain" id="PRO_0000441769" description="Prokaryotic ubiquitin-like protein UBact">
    <location>
        <begin position="1"/>
        <end position="63"/>
    </location>
</feature>
<feature type="region of interest" description="Disordered" evidence="2">
    <location>
        <begin position="1"/>
        <end position="63"/>
    </location>
</feature>
<feature type="compositionally biased region" description="Basic and acidic residues" evidence="2">
    <location>
        <begin position="17"/>
        <end position="50"/>
    </location>
</feature>
<feature type="cross-link" description="Isoglutamyl lysine isopeptide (Glu-Lys) (interchain with K-? in acceptor proteins)" evidence="4">
    <location>
        <position position="63"/>
    </location>
</feature>
<proteinExistence type="inferred from homology"/>
<evidence type="ECO:0000255" key="1">
    <source>
        <dbReference type="HAMAP-Rule" id="MF_02133"/>
    </source>
</evidence>
<evidence type="ECO:0000256" key="2">
    <source>
        <dbReference type="SAM" id="MobiDB-lite"/>
    </source>
</evidence>
<evidence type="ECO:0000303" key="3">
    <source>
    </source>
</evidence>
<evidence type="ECO:0000305" key="4"/>
<evidence type="ECO:0000305" key="5">
    <source>
    </source>
</evidence>
<evidence type="ECO:0000312" key="6">
    <source>
        <dbReference type="EMBL" id="OGG52311.1"/>
    </source>
</evidence>
<organism>
    <name type="scientific">Handelsmanbacteria sp. (strain RIFCSPLOWO2_12_FULL_64_10)</name>
    <dbReference type="NCBI Taxonomy" id="1817868"/>
    <lineage>
        <taxon>Bacteria</taxon>
        <taxon>Candidatus Handelsmaniibacteriota</taxon>
    </lineage>
</organism>
<name>UBACT_HANXR</name>
<gene>
    <name evidence="3" type="primary">ubact</name>
    <name evidence="6" type="ORF">A3F84_05195</name>
</gene>
<sequence>MSGRSTFGRFGPPSSEPWERKPGDDEGGPKRPKVERPDTNDLLKRMRRVDPNQSRRYRQRTGE</sequence>
<keyword id="KW-1017">Isopeptide bond</keyword>
<keyword id="KW-0833">Ubl conjugation pathway</keyword>